<comment type="function">
    <text evidence="1 5 7 8 9 10 11 12 13 14 15 16 17 18 19 21 22">Endoribonuclease involved in various biological functions such as cellular inflammatory response and immune homeostasis, glial differentiation of neuroprogenitor cells, cell death of cardiomyocytes, adipogenesis and angiogenesis. Functions as an endoribonuclease involved in mRNA decay (PubMed:26000482). Modulates the inflammatory response by promoting the degradation of a set of translationally active cytokine-induced inflammation-related mRNAs, such as IL6 and IL12B, during the early phase of inflammation (PubMed:19322177, PubMed:21115689, PubMed:23185455, PubMed:26000482). Prevents aberrant T-cell-mediated immune reaction by degradation of multiple mRNAs controlling T-cell activation, such as those encoding cytokines (IL6 and IL2), cell surface receptors (ICOS, TNFRSF4 and TNFR2) and transcription factor (REL) (PubMed:19322177, PubMed:21115689, PubMed:23185455, PubMed:23706741, PubMed:26000482). Inhibits cooperatively with ZC3H12A the differentiation of helper T cells Th17 in lungs. They repress target mRNA encoding the Th17 cell-promoting factors IL6, ICOS, REL, IRF4, NFKBID and NFKBIZ. The cooperation requires RNA-binding by RC3H1 and the nuclease activity of ZC3H12A (PubMed:25282160). Together with RC3H1, destabilizes TNFRSF4/OX40 mRNA by binding to the conserved stem loop structure in its 3'UTR (PubMed:29244194, PubMed:35819231). Self regulates by destabilizing its own mRNA (PubMed:22037600). Cleaves mRNA harboring a stem-loop (SL), often located in their 3'-UTRs, during the early phase of inflammation in a helicase UPF1-dependent manner (PubMed:19322177, PubMed:23185455, PubMed:23706741, PubMed:26000482, PubMed:26134560). Plays a role in the inhibition of microRNAs (miRNAs) biogenesis (By similarity). Cleaves the terminal loop of a set of precursor miRNAs (pre-miRNAs) important for the regulation of the inflammatory response leading to their degradation, and thus preventing the biosynthesis of mature miRNAs (By similarity). Also plays a role in promoting angiogenesis in response to inflammatory cytokines by inhibiting the production of antiangiogenic microRNAs via its anti-dicer RNase activity (By similarity). Affects the overall ubiquitination of cellular proteins (PubMed:21115689). Positively regulates deubiquitinase activity promoting the cleavage at 'Lys-48'- and 'Lys-63'-linked polyubiquitin chains on TNF receptor-associated factors (TRAFs), preventing JNK and NF-kappa-B signaling pathway activation, and hence negatively regulating macrophage-mediated inflammatory response and immune homeostasis (PubMed:21115689). Induces also deubiquitination of the transcription factor HIF1A, probably leading to its stabilization and nuclear import, thereby positively regulating the expression of proangiogenic HIF1A-targeted genes. Involved in a TANK-dependent negative feedback response to attenuate NF-kappaB activation through the deubiquitination of IKBKG or TRAF6 in response to interleukin-1-beta (IL1B) stimulation or upon DNA damage (By similarity). Prevents stress granules (SGs) formation and promotes macrophage apoptosis under stress conditions, including arsenite-induced oxidative stress, heat shock, and energy deprivation (PubMed:21971051). Plays a role in the regulation of macrophage polarization; promotes IL4-induced polarization of macrophages M1 into anti-inflammatory M2 state (PubMed:25934862). May also act as a transcription factor that regulates the expression of multiple genes involved in inflammatory response, angiogenesis, adipogenesis and apoptosis (PubMed:18178554, PubMed:19666473, PubMed:22739135). Functions as a positive regulator of glial differentiation of neuroprogenitor cells through an amyloid precursor protein (APP)-dependent signaling pathway (By similarity). Attenuates septic myocardial contractile dysfunction in response to lipopolysaccharide (LPS) by reducing I-kappa-B-kinase (IKK)-mediated NF-kappa-B activation, and hence myocardial pro-inflammatory cytokine production (PubMed:21616078).</text>
</comment>
<comment type="cofactor">
    <cofactor evidence="7">
        <name>Mg(2+)</name>
        <dbReference type="ChEBI" id="CHEBI:18420"/>
    </cofactor>
    <text evidence="7">Mg(2+) is required for RNase activity (PubMed:19322177).</text>
</comment>
<comment type="subunit">
    <text evidence="1 9 12 18">Oligomer (By similarity). Found in a deubiquitination complex with TANK, USP10 and ZC3H12A; this complex inhibits genotoxic stress- or interleukin-1-beta-mediated NF-kappaB activation by promoting IKBKG or TRAF6 deubiquitination. Interacts with IKBKG; this interaction increases in response to DNA damage. Interacts with TANK; this interaction increases in response to DNA damage and serves as a bridge to anchor both TANK and USP10 into a deubiquitinating complex. Interacts with TRAF6; this interaction increases in response to DNA damage and is stimulated by TANK. Interacts with USP10; this interaction increases in response to DNA damage and serves as a bridge to anchor both TANK and USP10 into a deubiquitinating complex. Interacts with ZC3H12D. Interacts with TNRC6A. Interacts with IKBKB/IKKB. Interacts with IKBKB/IKKB (By similarity). Interacts with IKBKB/IKKB (PubMed:22037600). Interacts with BTRC; the interaction occurs when ZC3H12A is phosphorylated in a IKBKB/IKKB-dependent manner (PubMed:22037600). Interacts with IRAK1; this interaction increases the interaction between ZC3H12A and IKBKB/IKKB (PubMed:22037600). Interacts with UPF1; this interaction occurs in a mRNA translationally active- and termination-dependent manner and is essential for ZC3H12A-mediated degradation of target mRNAs (PubMed:26000482). Associates with ribosomes (PubMed:26000482). Interacts with ubiquitin (PubMed:21115689).</text>
</comment>
<comment type="interaction">
    <interactant intactId="EBI-5326026">
        <id>Q5D1E7</id>
    </interactant>
    <interactant intactId="EBI-81266">
        <id>O14920</id>
        <label>IKBKB</label>
    </interactant>
    <organismsDiffer>true</organismsDiffer>
    <experiments>4</experiments>
</comment>
<comment type="interaction">
    <interactant intactId="EBI-5326026">
        <id>Q5D1E7</id>
    </interactant>
    <interactant intactId="EBI-358664">
        <id>P51617</id>
        <label>IRAK1</label>
    </interactant>
    <organismsDiffer>true</organismsDiffer>
    <experiments>3</experiments>
</comment>
<comment type="subcellular location">
    <subcellularLocation>
        <location evidence="4 7">Nucleus</location>
    </subcellularLocation>
    <subcellularLocation>
        <location evidence="7 11 18">Cytoplasm</location>
    </subcellularLocation>
    <subcellularLocation>
        <location evidence="18">Rough endoplasmic reticulum membrane</location>
        <topology evidence="18">Peripheral membrane protein</topology>
        <orientation evidence="18">Cytoplasmic side</orientation>
    </subcellularLocation>
    <subcellularLocation>
        <location evidence="11">Cytoplasmic granule</location>
    </subcellularLocation>
    <subcellularLocation>
        <location evidence="1">Cytoplasm</location>
        <location evidence="1">P-body</location>
    </subcellularLocation>
    <text evidence="1 7 11 18">Predominantly localized in the cytoplasm (PubMed:19322177). Colocalizes with GW182 on many granule-like structures, probably corresponding to cytoplasmic GW bodies (GWBs), also called processing bodies (P bodies) (PubMed:21971051). Colocalizes with calnexin on the surface of the rough endoplasmic reticulum (RER) membrane and with translationally active polysomes (PubMed:26000482). Colocalizes with ZC3H12D in cytoplasmic mRNA processing P-body, also known as GW bodies (GWBs) (By similarity).</text>
</comment>
<comment type="tissue specificity">
    <text evidence="4 5 6 10 12 21">Expressed in CD4(+) helper T-cells (at protein level) (PubMed:29244194). Highly expressed in macrophages (PubMed:18178554). Expressed in lung, lymph nodes, spleen and thymus (PubMed:22037600). Expressed weakly in heart (PubMed:21616078). Expressed weakly in cardiomyocytes (at protein level) (PubMed:16574901). Expressed in spleen, lung, intestine, brown adipose tissue and thymus (PubMed:18682727). Weakly expressed in the heart (PubMed:16574901). Weakly expressed in cardiomyocytes (PubMed:16574901).</text>
</comment>
<comment type="induction">
    <text evidence="5 6 7 8 10 14 17 20">Up-regulated by the transcription factor KLF4 in a interleukin IL4-dependent manner in macrophage (PubMed:25934862). Up-regulated by lipopolysaccharide (LPS) (at protein level) (PubMed:21616078). Up-regulated by chemokine CCL2 during adipocytes differentiation (PubMed:19666473). Up-regulated in activated T lymphocytes (PubMed:23185455). Up-regulated in response to lipopolysaccharide (LPS) in a MyD88-dependent manner in macrophages (PubMed:18178554, PubMed:18682727, PubMed:19322177). Up-regulated by phorbol 13-acetate 12-myristate (PMA) in primary T lymphocytes (PubMed:23185455). Up-regulated by interleukin IL17 in keratinocytes (PubMed:26320658).</text>
</comment>
<comment type="domain">
    <text evidence="1">The C3H1-type zinc finger domain and C-terminal region are necessary for pre-miRNA binding (By similarity). The C-terminal region and proline-rich domain are necessary for oligomerization (By similarity).</text>
</comment>
<comment type="PTM">
    <text evidence="15 16">Proteolytically cleaved between Arg-111 and Arg-214 by MALT1 in activated T-cells; cleavage at Arg-111 is critical for promoting ZC3H12A degradation in response to T-cell receptor (TCR) stimulation, and hence is necessary for prolonging the stability of a set of mRNAs controlling T-cell activation and Th17 cell differentiation.</text>
</comment>
<comment type="PTM">
    <text evidence="12">Phosphorylated by IRAK1; phosphorylation is necessary for subsequent phosphorylation by the I-kappa-B-kinase (IKK) complex. Phosphorylated by I-kappa-B-kinases (IKKs) at Ser-435 and Ser-439 upon lipopolysaccharide (LPS) or IL1B stimulation in macrophages through the MyD88-dependent signaling pathway; these phosphorylations promote rapid ubiquitin proteasome-mediated degradation of ZC3H12A in macrophages and hence allows its target mRNAs, such as IL6, to escape from degradation and accumulate during the inflammatory response (PubMed:22037600).</text>
</comment>
<comment type="PTM">
    <text evidence="12">Ubiquitinated; ubiquitination is induced in response to interleukin IL1 receptor stimuli in a IKBKB/IKKB and IRAK1-dependent manner, leading to proteasome-mediated degradation (PubMed:22037600).</text>
</comment>
<comment type="disease">
    <text evidence="4">Increased expression of ZC3H12A is associated with ischemic heart disease (PubMed:16574901).</text>
</comment>
<comment type="disruption phenotype">
    <text evidence="7 9 11 15 17 18 20">Most mice die within the first 12 weeks (PubMed:21115689). Show severe inflammatory syndromes, including growth retardation, splenomegaly and lymphoadenopathy (PubMed:19322177, PubMed:21115689). show systemic inflammation characterized by T-cell and B-cell activation (PubMed:23706741). Exhibit greatly increased levels of plasma cells and infiltration of plasma cells into the lungs (PubMed:19322177, PubMed:21115689). Show elevated serum immunoglobulin levels and produce anti-nuclear autoantibodies (PubMed:19322177, PubMed:23706741). Mice show increased production of pro-inflammatory cytokine mRNAs and secreted protein levels, such as IL6, TNF and PTGS2 expression upon lipopolysaccharide (LPS) stimulation in bone marrow macrophages (BBMs) or embryonic fibroblasts, particularly in the early phase of the inflammatory response (PubMed:21115689, PubMed:26000482). Show impaired degradation of IL6 mRNA (PubMed:19322177, PubMed:21115689). Show an increased in both JNK and NF-kappa-B signaling pathway activations upon LPS stimulation (PubMed:21115689). Show an increase in global ubiquitinated protein level in splenocytes (PubMed:21115689). Display a drastic increase in both basal and LPS- or TNF-induced ubiquitination of TRAF2, TRAF3 and TRAF6 in splenocytes (PubMed:21115689). Splenocytes show spontaneously formed aggregation of stress granules (SGs) and were resistant to stress-induced apoptosis (PubMed:21971051). Heterozygous knockout mice display IL-17-dependent enhanced resistance to disseminated Candida albicans infection compared to wild-type mice (PubMed:26320658). Double knockout of ZC3H12A and RC3H1 result in embryonic developmental arrest and death; embryonic fibroblasts from these mice show a higher increase in IL6, TNF and PTGS2 expression upon LPS stimulation, both in early and late phases of the responses, compared to single knockout of either ZC3H12A or RC3H1 (PubMed:26000482). T-cell specific conditional knockout mice die within the first 8 to 17 weeks after birth with the development of severe splenomegaly and the development of a severe autoimmune inflammatory disease (PubMed:23706741). Show massive increase in effector/memory T-cells with elevated production of interferon IFNG, interleukins IL17A and IL4 in response to phorbol 13-acetate 12-myristate (PMA) (PubMed:23706741). Proteolytic cleavage is inhibited in T-cells in response to antigen stimulation (PubMed:23706741). Conditional knockout in myeloid cells show impairment in IL4-induced macrophage M2 polarization (PubMed:25934862).</text>
</comment>
<comment type="similarity">
    <text evidence="29">Belongs to the ZC3H12 family.</text>
</comment>
<organism>
    <name type="scientific">Mus musculus</name>
    <name type="common">Mouse</name>
    <dbReference type="NCBI Taxonomy" id="10090"/>
    <lineage>
        <taxon>Eukaryota</taxon>
        <taxon>Metazoa</taxon>
        <taxon>Chordata</taxon>
        <taxon>Craniata</taxon>
        <taxon>Vertebrata</taxon>
        <taxon>Euteleostomi</taxon>
        <taxon>Mammalia</taxon>
        <taxon>Eutheria</taxon>
        <taxon>Euarchontoglires</taxon>
        <taxon>Glires</taxon>
        <taxon>Rodentia</taxon>
        <taxon>Myomorpha</taxon>
        <taxon>Muroidea</taxon>
        <taxon>Muridae</taxon>
        <taxon>Murinae</taxon>
        <taxon>Mus</taxon>
        <taxon>Mus</taxon>
    </lineage>
</organism>
<dbReference type="EC" id="3.1.-.-" evidence="7"/>
<dbReference type="EMBL" id="AY920404">
    <property type="protein sequence ID" value="AAX14018.1"/>
    <property type="molecule type" value="mRNA"/>
</dbReference>
<dbReference type="EMBL" id="AK142501">
    <property type="protein sequence ID" value="BAE25089.1"/>
    <property type="molecule type" value="mRNA"/>
</dbReference>
<dbReference type="EMBL" id="AK149698">
    <property type="protein sequence ID" value="BAE29035.1"/>
    <property type="molecule type" value="mRNA"/>
</dbReference>
<dbReference type="EMBL" id="AK152196">
    <property type="protein sequence ID" value="BAE31025.1"/>
    <property type="molecule type" value="mRNA"/>
</dbReference>
<dbReference type="EMBL" id="AK161150">
    <property type="protein sequence ID" value="BAE36216.1"/>
    <property type="molecule type" value="mRNA"/>
</dbReference>
<dbReference type="EMBL" id="AK172357">
    <property type="protein sequence ID" value="BAE42965.1"/>
    <property type="molecule type" value="mRNA"/>
</dbReference>
<dbReference type="EMBL" id="AL626775">
    <property type="status" value="NOT_ANNOTATED_CDS"/>
    <property type="molecule type" value="Genomic_DNA"/>
</dbReference>
<dbReference type="EMBL" id="BC006817">
    <property type="protein sequence ID" value="AAH06817.1"/>
    <property type="molecule type" value="mRNA"/>
</dbReference>
<dbReference type="EMBL" id="BC036563">
    <property type="protein sequence ID" value="AAH36563.1"/>
    <property type="molecule type" value="mRNA"/>
</dbReference>
<dbReference type="CCDS" id="CCDS18638.1"/>
<dbReference type="RefSeq" id="NP_694799.1">
    <property type="nucleotide sequence ID" value="NM_153159.2"/>
</dbReference>
<dbReference type="PDB" id="2N5J">
    <property type="method" value="NMR"/>
    <property type="chains" value="A=45-89"/>
</dbReference>
<dbReference type="PDB" id="2N5K">
    <property type="method" value="NMR"/>
    <property type="chains" value="A=299-327"/>
</dbReference>
<dbReference type="PDB" id="2N5L">
    <property type="method" value="NMR"/>
    <property type="chains" value="A=544-596"/>
</dbReference>
<dbReference type="PDB" id="5H9V">
    <property type="method" value="X-ray"/>
    <property type="resolution" value="2.75 A"/>
    <property type="chains" value="A/B/C/D=134-339"/>
</dbReference>
<dbReference type="PDB" id="5H9W">
    <property type="method" value="X-ray"/>
    <property type="resolution" value="2.60 A"/>
    <property type="chains" value="A/B=134-339"/>
</dbReference>
<dbReference type="PDBsum" id="2N5J"/>
<dbReference type="PDBsum" id="2N5K"/>
<dbReference type="PDBsum" id="2N5L"/>
<dbReference type="PDBsum" id="5H9V"/>
<dbReference type="PDBsum" id="5H9W"/>
<dbReference type="SMR" id="Q5D1E7"/>
<dbReference type="BioGRID" id="231011">
    <property type="interactions" value="3"/>
</dbReference>
<dbReference type="CORUM" id="Q5D1E7"/>
<dbReference type="FunCoup" id="Q5D1E7">
    <property type="interactions" value="445"/>
</dbReference>
<dbReference type="IntAct" id="Q5D1E7">
    <property type="interactions" value="4"/>
</dbReference>
<dbReference type="MINT" id="Q5D1E7"/>
<dbReference type="STRING" id="10090.ENSMUSP00000037172"/>
<dbReference type="GlyGen" id="Q5D1E7">
    <property type="glycosylation" value="1 site"/>
</dbReference>
<dbReference type="iPTMnet" id="Q5D1E7"/>
<dbReference type="PhosphoSitePlus" id="Q5D1E7"/>
<dbReference type="jPOST" id="Q5D1E7"/>
<dbReference type="PaxDb" id="10090-ENSMUSP00000037172"/>
<dbReference type="ProteomicsDB" id="302041"/>
<dbReference type="Antibodypedia" id="31721">
    <property type="antibodies" value="194 antibodies from 34 providers"/>
</dbReference>
<dbReference type="Ensembl" id="ENSMUST00000036188.8">
    <property type="protein sequence ID" value="ENSMUSP00000037172.8"/>
    <property type="gene ID" value="ENSMUSG00000042677.8"/>
</dbReference>
<dbReference type="GeneID" id="230738"/>
<dbReference type="KEGG" id="mmu:230738"/>
<dbReference type="UCSC" id="uc008urw.2">
    <property type="organism name" value="mouse"/>
</dbReference>
<dbReference type="AGR" id="MGI:2385891"/>
<dbReference type="CTD" id="80149"/>
<dbReference type="MGI" id="MGI:2385891">
    <property type="gene designation" value="Zc3h12a"/>
</dbReference>
<dbReference type="VEuPathDB" id="HostDB:ENSMUSG00000042677"/>
<dbReference type="eggNOG" id="KOG3777">
    <property type="taxonomic scope" value="Eukaryota"/>
</dbReference>
<dbReference type="GeneTree" id="ENSGT00940000155107"/>
<dbReference type="HOGENOM" id="CLU_013020_2_1_1"/>
<dbReference type="InParanoid" id="Q5D1E7"/>
<dbReference type="OMA" id="DMWPYRS"/>
<dbReference type="OrthoDB" id="392925at2759"/>
<dbReference type="PhylomeDB" id="Q5D1E7"/>
<dbReference type="TreeFam" id="TF315783"/>
<dbReference type="BioGRID-ORCS" id="230738">
    <property type="hits" value="5 hits in 79 CRISPR screens"/>
</dbReference>
<dbReference type="ChiTaRS" id="Zc3h12a">
    <property type="organism name" value="mouse"/>
</dbReference>
<dbReference type="EvolutionaryTrace" id="Q5D1E7"/>
<dbReference type="PRO" id="PR:Q5D1E7"/>
<dbReference type="Proteomes" id="UP000000589">
    <property type="component" value="Chromosome 4"/>
</dbReference>
<dbReference type="RNAct" id="Q5D1E7">
    <property type="molecule type" value="protein"/>
</dbReference>
<dbReference type="Bgee" id="ENSMUSG00000042677">
    <property type="expression patterns" value="Expressed in granulocyte and 85 other cell types or tissues"/>
</dbReference>
<dbReference type="GO" id="GO:0005737">
    <property type="term" value="C:cytoplasm"/>
    <property type="evidence" value="ECO:0000314"/>
    <property type="project" value="UniProtKB"/>
</dbReference>
<dbReference type="GO" id="GO:0005856">
    <property type="term" value="C:cytoskeleton"/>
    <property type="evidence" value="ECO:0000250"/>
    <property type="project" value="UniProtKB"/>
</dbReference>
<dbReference type="GO" id="GO:0005654">
    <property type="term" value="C:nucleoplasm"/>
    <property type="evidence" value="ECO:0007669"/>
    <property type="project" value="Ensembl"/>
</dbReference>
<dbReference type="GO" id="GO:0005634">
    <property type="term" value="C:nucleus"/>
    <property type="evidence" value="ECO:0000314"/>
    <property type="project" value="UniProtKB"/>
</dbReference>
<dbReference type="GO" id="GO:0000932">
    <property type="term" value="C:P-body"/>
    <property type="evidence" value="ECO:0000250"/>
    <property type="project" value="UniProtKB"/>
</dbReference>
<dbReference type="GO" id="GO:0032991">
    <property type="term" value="C:protein-containing complex"/>
    <property type="evidence" value="ECO:0000250"/>
    <property type="project" value="UniProtKB"/>
</dbReference>
<dbReference type="GO" id="GO:0005791">
    <property type="term" value="C:rough endoplasmic reticulum"/>
    <property type="evidence" value="ECO:0000314"/>
    <property type="project" value="UniProtKB"/>
</dbReference>
<dbReference type="GO" id="GO:0030867">
    <property type="term" value="C:rough endoplasmic reticulum membrane"/>
    <property type="evidence" value="ECO:0000314"/>
    <property type="project" value="UniProtKB"/>
</dbReference>
<dbReference type="GO" id="GO:0003682">
    <property type="term" value="F:chromatin binding"/>
    <property type="evidence" value="ECO:0000250"/>
    <property type="project" value="UniProtKB"/>
</dbReference>
<dbReference type="GO" id="GO:0004843">
    <property type="term" value="F:cysteine-type deubiquitinase activity"/>
    <property type="evidence" value="ECO:0007669"/>
    <property type="project" value="Ensembl"/>
</dbReference>
<dbReference type="GO" id="GO:0003677">
    <property type="term" value="F:DNA binding"/>
    <property type="evidence" value="ECO:0000250"/>
    <property type="project" value="UniProtKB"/>
</dbReference>
<dbReference type="GO" id="GO:0035198">
    <property type="term" value="F:miRNA binding"/>
    <property type="evidence" value="ECO:0000250"/>
    <property type="project" value="UniProtKB"/>
</dbReference>
<dbReference type="GO" id="GO:0035925">
    <property type="term" value="F:mRNA 3'-UTR AU-rich region binding"/>
    <property type="evidence" value="ECO:0000314"/>
    <property type="project" value="UniProtKB"/>
</dbReference>
<dbReference type="GO" id="GO:0003730">
    <property type="term" value="F:mRNA 3'-UTR binding"/>
    <property type="evidence" value="ECO:0000314"/>
    <property type="project" value="UniProtKB"/>
</dbReference>
<dbReference type="GO" id="GO:0003729">
    <property type="term" value="F:mRNA binding"/>
    <property type="evidence" value="ECO:0000269"/>
    <property type="project" value="DisProt"/>
</dbReference>
<dbReference type="GO" id="GO:0004518">
    <property type="term" value="F:nuclease activity"/>
    <property type="evidence" value="ECO:0000315"/>
    <property type="project" value="UniProtKB"/>
</dbReference>
<dbReference type="GO" id="GO:0043022">
    <property type="term" value="F:ribosome binding"/>
    <property type="evidence" value="ECO:0000314"/>
    <property type="project" value="UniProtKB"/>
</dbReference>
<dbReference type="GO" id="GO:0004521">
    <property type="term" value="F:RNA endonuclease activity"/>
    <property type="evidence" value="ECO:0000314"/>
    <property type="project" value="UniProtKB"/>
</dbReference>
<dbReference type="GO" id="GO:0004532">
    <property type="term" value="F:RNA exonuclease activity"/>
    <property type="evidence" value="ECO:0000314"/>
    <property type="project" value="UniProtKB"/>
</dbReference>
<dbReference type="GO" id="GO:0035613">
    <property type="term" value="F:RNA stem-loop binding"/>
    <property type="evidence" value="ECO:0000314"/>
    <property type="project" value="UniProtKB"/>
</dbReference>
<dbReference type="GO" id="GO:0008270">
    <property type="term" value="F:zinc ion binding"/>
    <property type="evidence" value="ECO:0007669"/>
    <property type="project" value="UniProtKB-KW"/>
</dbReference>
<dbReference type="GO" id="GO:0061158">
    <property type="term" value="P:3'-UTR-mediated mRNA destabilization"/>
    <property type="evidence" value="ECO:0000314"/>
    <property type="project" value="UniProtKB"/>
</dbReference>
<dbReference type="GO" id="GO:0001525">
    <property type="term" value="P:angiogenesis"/>
    <property type="evidence" value="ECO:0007669"/>
    <property type="project" value="UniProtKB-KW"/>
</dbReference>
<dbReference type="GO" id="GO:0006915">
    <property type="term" value="P:apoptotic process"/>
    <property type="evidence" value="ECO:0007669"/>
    <property type="project" value="UniProtKB-KW"/>
</dbReference>
<dbReference type="GO" id="GO:0030154">
    <property type="term" value="P:cell differentiation"/>
    <property type="evidence" value="ECO:0007669"/>
    <property type="project" value="UniProtKB-KW"/>
</dbReference>
<dbReference type="GO" id="GO:1990869">
    <property type="term" value="P:cellular response to chemokine"/>
    <property type="evidence" value="ECO:0000314"/>
    <property type="project" value="UniProtKB"/>
</dbReference>
<dbReference type="GO" id="GO:0042149">
    <property type="term" value="P:cellular response to glucose starvation"/>
    <property type="evidence" value="ECO:0000314"/>
    <property type="project" value="UniProtKB"/>
</dbReference>
<dbReference type="GO" id="GO:0071347">
    <property type="term" value="P:cellular response to interleukin-1"/>
    <property type="evidence" value="ECO:0000304"/>
    <property type="project" value="UniProtKB"/>
</dbReference>
<dbReference type="GO" id="GO:1904637">
    <property type="term" value="P:cellular response to ionomycin"/>
    <property type="evidence" value="ECO:0000314"/>
    <property type="project" value="UniProtKB"/>
</dbReference>
<dbReference type="GO" id="GO:0071222">
    <property type="term" value="P:cellular response to lipopolysaccharide"/>
    <property type="evidence" value="ECO:0000314"/>
    <property type="project" value="UniProtKB"/>
</dbReference>
<dbReference type="GO" id="GO:0034599">
    <property type="term" value="P:cellular response to oxidative stress"/>
    <property type="evidence" value="ECO:0000314"/>
    <property type="project" value="UniProtKB"/>
</dbReference>
<dbReference type="GO" id="GO:1903936">
    <property type="term" value="P:cellular response to sodium arsenite"/>
    <property type="evidence" value="ECO:0000314"/>
    <property type="project" value="UniProtKB"/>
</dbReference>
<dbReference type="GO" id="GO:0071356">
    <property type="term" value="P:cellular response to tumor necrosis factor"/>
    <property type="evidence" value="ECO:0000250"/>
    <property type="project" value="UniProtKB"/>
</dbReference>
<dbReference type="GO" id="GO:0098586">
    <property type="term" value="P:cellular response to virus"/>
    <property type="evidence" value="ECO:0007669"/>
    <property type="project" value="Ensembl"/>
</dbReference>
<dbReference type="GO" id="GO:0006974">
    <property type="term" value="P:DNA damage response"/>
    <property type="evidence" value="ECO:0000250"/>
    <property type="project" value="UniProtKB"/>
</dbReference>
<dbReference type="GO" id="GO:0002757">
    <property type="term" value="P:immune response-activating signaling pathway"/>
    <property type="evidence" value="ECO:0000250"/>
    <property type="project" value="UniProtKB"/>
</dbReference>
<dbReference type="GO" id="GO:0006954">
    <property type="term" value="P:inflammatory response"/>
    <property type="evidence" value="ECO:0007669"/>
    <property type="project" value="UniProtKB-KW"/>
</dbReference>
<dbReference type="GO" id="GO:0010587">
    <property type="term" value="P:miRNA catabolic process"/>
    <property type="evidence" value="ECO:0000250"/>
    <property type="project" value="UniProtKB"/>
</dbReference>
<dbReference type="GO" id="GO:0006402">
    <property type="term" value="P:mRNA catabolic process"/>
    <property type="evidence" value="ECO:0000314"/>
    <property type="project" value="UniProtKB"/>
</dbReference>
<dbReference type="GO" id="GO:0044828">
    <property type="term" value="P:negative regulation by host of viral genome replication"/>
    <property type="evidence" value="ECO:0007669"/>
    <property type="project" value="Ensembl"/>
</dbReference>
<dbReference type="GO" id="GO:0043124">
    <property type="term" value="P:negative regulation of canonical NF-kappaB signal transduction"/>
    <property type="evidence" value="ECO:0000314"/>
    <property type="project" value="UniProtKB"/>
</dbReference>
<dbReference type="GO" id="GO:0055118">
    <property type="term" value="P:negative regulation of cardiac muscle contraction"/>
    <property type="evidence" value="ECO:0000314"/>
    <property type="project" value="UniProtKB"/>
</dbReference>
<dbReference type="GO" id="GO:1900016">
    <property type="term" value="P:negative regulation of cytokine production involved in inflammatory response"/>
    <property type="evidence" value="ECO:0000314"/>
    <property type="project" value="UniProtKB"/>
</dbReference>
<dbReference type="GO" id="GO:0010629">
    <property type="term" value="P:negative regulation of gene expression"/>
    <property type="evidence" value="ECO:0000315"/>
    <property type="project" value="BHF-UCL"/>
</dbReference>
<dbReference type="GO" id="GO:0032691">
    <property type="term" value="P:negative regulation of interleukin-1 beta production"/>
    <property type="evidence" value="ECO:0000314"/>
    <property type="project" value="UniProtKB"/>
</dbReference>
<dbReference type="GO" id="GO:0032715">
    <property type="term" value="P:negative regulation of interleukin-6 production"/>
    <property type="evidence" value="ECO:0000314"/>
    <property type="project" value="UniProtKB"/>
</dbReference>
<dbReference type="GO" id="GO:0010656">
    <property type="term" value="P:negative regulation of muscle cell apoptotic process"/>
    <property type="evidence" value="ECO:0000314"/>
    <property type="project" value="UniProtKB"/>
</dbReference>
<dbReference type="GO" id="GO:0045019">
    <property type="term" value="P:negative regulation of nitric oxide biosynthetic process"/>
    <property type="evidence" value="ECO:0000314"/>
    <property type="project" value="UniProtKB"/>
</dbReference>
<dbReference type="GO" id="GO:1901223">
    <property type="term" value="P:negative regulation of non-canonical NF-kappaB signal transduction"/>
    <property type="evidence" value="ECO:0000314"/>
    <property type="project" value="UniProtKB"/>
</dbReference>
<dbReference type="GO" id="GO:0001933">
    <property type="term" value="P:negative regulation of protein phosphorylation"/>
    <property type="evidence" value="ECO:0000314"/>
    <property type="project" value="UniProtKB"/>
</dbReference>
<dbReference type="GO" id="GO:2000320">
    <property type="term" value="P:negative regulation of T-helper 17 cell differentiation"/>
    <property type="evidence" value="ECO:0000315"/>
    <property type="project" value="UniProtKB"/>
</dbReference>
<dbReference type="GO" id="GO:0032720">
    <property type="term" value="P:negative regulation of tumor necrosis factor production"/>
    <property type="evidence" value="ECO:0000314"/>
    <property type="project" value="UniProtKB"/>
</dbReference>
<dbReference type="GO" id="GO:0032689">
    <property type="term" value="P:negative regulation of type II interferon production"/>
    <property type="evidence" value="ECO:0000314"/>
    <property type="project" value="UniProtKB"/>
</dbReference>
<dbReference type="GO" id="GO:0007399">
    <property type="term" value="P:nervous system development"/>
    <property type="evidence" value="ECO:0007669"/>
    <property type="project" value="UniProtKB-KW"/>
</dbReference>
<dbReference type="GO" id="GO:0000184">
    <property type="term" value="P:nuclear-transcribed mRNA catabolic process, nonsense-mediated decay"/>
    <property type="evidence" value="ECO:0000304"/>
    <property type="project" value="UniProtKB"/>
</dbReference>
<dbReference type="GO" id="GO:0045766">
    <property type="term" value="P:positive regulation of angiogenesis"/>
    <property type="evidence" value="ECO:0000250"/>
    <property type="project" value="UniProtKB"/>
</dbReference>
<dbReference type="GO" id="GO:0010508">
    <property type="term" value="P:positive regulation of autophagy"/>
    <property type="evidence" value="ECO:0000315"/>
    <property type="project" value="BHF-UCL"/>
</dbReference>
<dbReference type="GO" id="GO:0002230">
    <property type="term" value="P:positive regulation of defense response to virus by host"/>
    <property type="evidence" value="ECO:0007669"/>
    <property type="project" value="Ensembl"/>
</dbReference>
<dbReference type="GO" id="GO:0010595">
    <property type="term" value="P:positive regulation of endothelial cell migration"/>
    <property type="evidence" value="ECO:0000250"/>
    <property type="project" value="UniProtKB"/>
</dbReference>
<dbReference type="GO" id="GO:1900119">
    <property type="term" value="P:positive regulation of execution phase of apoptosis"/>
    <property type="evidence" value="ECO:0000314"/>
    <property type="project" value="UniProtKB"/>
</dbReference>
<dbReference type="GO" id="GO:0045600">
    <property type="term" value="P:positive regulation of fat cell differentiation"/>
    <property type="evidence" value="ECO:0000314"/>
    <property type="project" value="UniProtKB"/>
</dbReference>
<dbReference type="GO" id="GO:0010628">
    <property type="term" value="P:positive regulation of gene expression"/>
    <property type="evidence" value="ECO:0000250"/>
    <property type="project" value="BHF-UCL"/>
</dbReference>
<dbReference type="GO" id="GO:0010884">
    <property type="term" value="P:positive regulation of lipid storage"/>
    <property type="evidence" value="ECO:0000315"/>
    <property type="project" value="BHF-UCL"/>
</dbReference>
<dbReference type="GO" id="GO:2000627">
    <property type="term" value="P:positive regulation of miRNA catabolic process"/>
    <property type="evidence" value="ECO:0007669"/>
    <property type="project" value="Ensembl"/>
</dbReference>
<dbReference type="GO" id="GO:0061014">
    <property type="term" value="P:positive regulation of mRNA catabolic process"/>
    <property type="evidence" value="ECO:0000314"/>
    <property type="project" value="UniProtKB"/>
</dbReference>
<dbReference type="GO" id="GO:1900745">
    <property type="term" value="P:positive regulation of p38MAPK cascade"/>
    <property type="evidence" value="ECO:0000250"/>
    <property type="project" value="UniProtKB"/>
</dbReference>
<dbReference type="GO" id="GO:1903003">
    <property type="term" value="P:positive regulation of protein deubiquitination"/>
    <property type="evidence" value="ECO:0000250"/>
    <property type="project" value="UniProtKB"/>
</dbReference>
<dbReference type="GO" id="GO:0042307">
    <property type="term" value="P:positive regulation of protein import into nucleus"/>
    <property type="evidence" value="ECO:0000250"/>
    <property type="project" value="UniProtKB"/>
</dbReference>
<dbReference type="GO" id="GO:2000379">
    <property type="term" value="P:positive regulation of reactive oxygen species metabolic process"/>
    <property type="evidence" value="ECO:0000250"/>
    <property type="project" value="BHF-UCL"/>
</dbReference>
<dbReference type="GO" id="GO:0045944">
    <property type="term" value="P:positive regulation of transcription by RNA polymerase II"/>
    <property type="evidence" value="ECO:0000314"/>
    <property type="project" value="UniProtKB"/>
</dbReference>
<dbReference type="GO" id="GO:0051259">
    <property type="term" value="P:protein complex oligomerization"/>
    <property type="evidence" value="ECO:0000250"/>
    <property type="project" value="UniProtKB"/>
</dbReference>
<dbReference type="GO" id="GO:0016579">
    <property type="term" value="P:protein deubiquitination"/>
    <property type="evidence" value="ECO:0000250"/>
    <property type="project" value="UniProtKB"/>
</dbReference>
<dbReference type="GO" id="GO:0050852">
    <property type="term" value="P:T cell receptor signaling pathway"/>
    <property type="evidence" value="ECO:0000314"/>
    <property type="project" value="UniProtKB"/>
</dbReference>
<dbReference type="CDD" id="cd18729">
    <property type="entry name" value="PIN_Zc3h12-like"/>
    <property type="match status" value="1"/>
</dbReference>
<dbReference type="DisProt" id="DP02871"/>
<dbReference type="FunFam" id="3.40.50.11980:FF:000001">
    <property type="entry name" value="ZC3H12A isoform 1"/>
    <property type="match status" value="1"/>
</dbReference>
<dbReference type="Gene3D" id="3.40.50.11980">
    <property type="match status" value="1"/>
</dbReference>
<dbReference type="InterPro" id="IPR040546">
    <property type="entry name" value="Rege-1_UBA-like"/>
</dbReference>
<dbReference type="InterPro" id="IPR040757">
    <property type="entry name" value="Regnase_1/ZC3H12_C"/>
</dbReference>
<dbReference type="InterPro" id="IPR021869">
    <property type="entry name" value="RNase_Zc3h12_NYN"/>
</dbReference>
<dbReference type="InterPro" id="IPR051101">
    <property type="entry name" value="ZC3H12/N4BP1_RNase_Reg"/>
</dbReference>
<dbReference type="PANTHER" id="PTHR12876:SF10">
    <property type="entry name" value="ENDORIBONUCLEASE ZC3H12A"/>
    <property type="match status" value="1"/>
</dbReference>
<dbReference type="PANTHER" id="PTHR12876">
    <property type="entry name" value="N4BP1-RELATED"/>
    <property type="match status" value="1"/>
</dbReference>
<dbReference type="Pfam" id="PF18561">
    <property type="entry name" value="Regnase_1_C"/>
    <property type="match status" value="1"/>
</dbReference>
<dbReference type="Pfam" id="PF11977">
    <property type="entry name" value="RNase_Zc3h12a"/>
    <property type="match status" value="1"/>
</dbReference>
<dbReference type="Pfam" id="PF18039">
    <property type="entry name" value="UBA_6"/>
    <property type="match status" value="1"/>
</dbReference>
<protein>
    <recommendedName>
        <fullName evidence="29">Endoribonuclease ZC3H12A</fullName>
        <ecNumber evidence="7">3.1.-.-</ecNumber>
    </recommendedName>
    <alternativeName>
        <fullName evidence="26">Monocyte chemotactic protein-induced protein 1</fullName>
        <shortName evidence="23">MCP-induced protein 1</shortName>
        <shortName evidence="23">MCPIP-1</shortName>
    </alternativeName>
    <alternativeName>
        <fullName evidence="28">Regnase-1</fullName>
        <shortName evidence="27">Reg1</shortName>
    </alternativeName>
    <alternativeName>
        <fullName evidence="38">Zinc finger CCCH domain-containing protein 12A</fullName>
    </alternativeName>
</protein>
<gene>
    <name evidence="24 38" type="primary">Zc3h12a</name>
    <name evidence="23" type="synonym">Mcpip</name>
    <name evidence="25" type="synonym">Mcpip1</name>
</gene>
<proteinExistence type="evidence at protein level"/>
<sequence length="596" mass="65598">MSDPCGTKPVQESNPTMSLWSLEDRHSSQGRPQPDQDPVAKEAPTSELQMKVDFFRKLGYSSSEIHSVLQKLGVQADTNTVLGELVKHGSATERECQALTAPSPQPPLVPRGGSTPKPSTLEPSLPEEDREGSDLRPVVIDGSNVAMSHGNKEVFSCRGILLAVNWFLERGHTDITVFVPSWRKEQPRPDVPITDQHILRELEKKKILVFTPSRRVGGKRVVCYDDRFIVKLAFESDGVVVSNDTYRDLQGERQEWKRFIEERLLMYSFVNDKFMPPDDPLGRHGPSLDNFLRKKPLPSEHRKQPCPYGKKCTYGIKCRFFHPERPSRPQRSVADELRANALLSPPRTPVKDKSSQRPSPASQSSSVSLEAEPGSLDGKKLGARSSPGPHREGSPQTCAPAGRSLPVSGGSFGPTEWLAHTQDSLPYTSQECLDSGIGSLESQMSELWGVRGGSPGESGPTRGPYAGYHSYGSKVPAAPSFSPFRPAMGAGHFSVPTDYVPPPPTYPSREYWSEPYPLPPPTPVLQEPQRPSPGAGGGPWGRVGDLAKERAGVYTKLCGVFPPHLVEAVMRRFPQLLDPQQLAAEILSYKSQHLSE</sequence>
<reference evidence="29 33" key="1">
    <citation type="journal article" date="2006" name="Circ. Res.">
        <title>Monocyte chemoattractant protein-1 induces a novel transcription factor that causes cardiac myocyte apoptosis and ventricular dysfunction.</title>
        <authorList>
            <person name="Zhou L."/>
            <person name="Azfer A."/>
            <person name="Niu J."/>
            <person name="Graham S."/>
            <person name="Choudhury M."/>
            <person name="Adamski F.M."/>
            <person name="Younce C."/>
            <person name="Binkley P.F."/>
            <person name="Kolattukudy P.E."/>
        </authorList>
    </citation>
    <scope>NUCLEOTIDE SEQUENCE [MRNA]</scope>
    <scope>SUBCELLULAR LOCATION</scope>
    <scope>TISSUE SPECIFICITY</scope>
    <scope>POSSIBLE INVOLVEMENT IN ISCHEMIC HEART DISEASE</scope>
    <source>
        <strain evidence="33">FVB/NJ</strain>
    </source>
</reference>
<reference evidence="34" key="2">
    <citation type="journal article" date="2005" name="Science">
        <title>The transcriptional landscape of the mammalian genome.</title>
        <authorList>
            <person name="Carninci P."/>
            <person name="Kasukawa T."/>
            <person name="Katayama S."/>
            <person name="Gough J."/>
            <person name="Frith M.C."/>
            <person name="Maeda N."/>
            <person name="Oyama R."/>
            <person name="Ravasi T."/>
            <person name="Lenhard B."/>
            <person name="Wells C."/>
            <person name="Kodzius R."/>
            <person name="Shimokawa K."/>
            <person name="Bajic V.B."/>
            <person name="Brenner S.E."/>
            <person name="Batalov S."/>
            <person name="Forrest A.R."/>
            <person name="Zavolan M."/>
            <person name="Davis M.J."/>
            <person name="Wilming L.G."/>
            <person name="Aidinis V."/>
            <person name="Allen J.E."/>
            <person name="Ambesi-Impiombato A."/>
            <person name="Apweiler R."/>
            <person name="Aturaliya R.N."/>
            <person name="Bailey T.L."/>
            <person name="Bansal M."/>
            <person name="Baxter L."/>
            <person name="Beisel K.W."/>
            <person name="Bersano T."/>
            <person name="Bono H."/>
            <person name="Chalk A.M."/>
            <person name="Chiu K.P."/>
            <person name="Choudhary V."/>
            <person name="Christoffels A."/>
            <person name="Clutterbuck D.R."/>
            <person name="Crowe M.L."/>
            <person name="Dalla E."/>
            <person name="Dalrymple B.P."/>
            <person name="de Bono B."/>
            <person name="Della Gatta G."/>
            <person name="di Bernardo D."/>
            <person name="Down T."/>
            <person name="Engstrom P."/>
            <person name="Fagiolini M."/>
            <person name="Faulkner G."/>
            <person name="Fletcher C.F."/>
            <person name="Fukushima T."/>
            <person name="Furuno M."/>
            <person name="Futaki S."/>
            <person name="Gariboldi M."/>
            <person name="Georgii-Hemming P."/>
            <person name="Gingeras T.R."/>
            <person name="Gojobori T."/>
            <person name="Green R.E."/>
            <person name="Gustincich S."/>
            <person name="Harbers M."/>
            <person name="Hayashi Y."/>
            <person name="Hensch T.K."/>
            <person name="Hirokawa N."/>
            <person name="Hill D."/>
            <person name="Huminiecki L."/>
            <person name="Iacono M."/>
            <person name="Ikeo K."/>
            <person name="Iwama A."/>
            <person name="Ishikawa T."/>
            <person name="Jakt M."/>
            <person name="Kanapin A."/>
            <person name="Katoh M."/>
            <person name="Kawasawa Y."/>
            <person name="Kelso J."/>
            <person name="Kitamura H."/>
            <person name="Kitano H."/>
            <person name="Kollias G."/>
            <person name="Krishnan S.P."/>
            <person name="Kruger A."/>
            <person name="Kummerfeld S.K."/>
            <person name="Kurochkin I.V."/>
            <person name="Lareau L.F."/>
            <person name="Lazarevic D."/>
            <person name="Lipovich L."/>
            <person name="Liu J."/>
            <person name="Liuni S."/>
            <person name="McWilliam S."/>
            <person name="Madan Babu M."/>
            <person name="Madera M."/>
            <person name="Marchionni L."/>
            <person name="Matsuda H."/>
            <person name="Matsuzawa S."/>
            <person name="Miki H."/>
            <person name="Mignone F."/>
            <person name="Miyake S."/>
            <person name="Morris K."/>
            <person name="Mottagui-Tabar S."/>
            <person name="Mulder N."/>
            <person name="Nakano N."/>
            <person name="Nakauchi H."/>
            <person name="Ng P."/>
            <person name="Nilsson R."/>
            <person name="Nishiguchi S."/>
            <person name="Nishikawa S."/>
            <person name="Nori F."/>
            <person name="Ohara O."/>
            <person name="Okazaki Y."/>
            <person name="Orlando V."/>
            <person name="Pang K.C."/>
            <person name="Pavan W.J."/>
            <person name="Pavesi G."/>
            <person name="Pesole G."/>
            <person name="Petrovsky N."/>
            <person name="Piazza S."/>
            <person name="Reed J."/>
            <person name="Reid J.F."/>
            <person name="Ring B.Z."/>
            <person name="Ringwald M."/>
            <person name="Rost B."/>
            <person name="Ruan Y."/>
            <person name="Salzberg S.L."/>
            <person name="Sandelin A."/>
            <person name="Schneider C."/>
            <person name="Schoenbach C."/>
            <person name="Sekiguchi K."/>
            <person name="Semple C.A."/>
            <person name="Seno S."/>
            <person name="Sessa L."/>
            <person name="Sheng Y."/>
            <person name="Shibata Y."/>
            <person name="Shimada H."/>
            <person name="Shimada K."/>
            <person name="Silva D."/>
            <person name="Sinclair B."/>
            <person name="Sperling S."/>
            <person name="Stupka E."/>
            <person name="Sugiura K."/>
            <person name="Sultana R."/>
            <person name="Takenaka Y."/>
            <person name="Taki K."/>
            <person name="Tammoja K."/>
            <person name="Tan S.L."/>
            <person name="Tang S."/>
            <person name="Taylor M.S."/>
            <person name="Tegner J."/>
            <person name="Teichmann S.A."/>
            <person name="Ueda H.R."/>
            <person name="van Nimwegen E."/>
            <person name="Verardo R."/>
            <person name="Wei C.L."/>
            <person name="Yagi K."/>
            <person name="Yamanishi H."/>
            <person name="Zabarovsky E."/>
            <person name="Zhu S."/>
            <person name="Zimmer A."/>
            <person name="Hide W."/>
            <person name="Bult C."/>
            <person name="Grimmond S.M."/>
            <person name="Teasdale R.D."/>
            <person name="Liu E.T."/>
            <person name="Brusic V."/>
            <person name="Quackenbush J."/>
            <person name="Wahlestedt C."/>
            <person name="Mattick J.S."/>
            <person name="Hume D.A."/>
            <person name="Kai C."/>
            <person name="Sasaki D."/>
            <person name="Tomaru Y."/>
            <person name="Fukuda S."/>
            <person name="Kanamori-Katayama M."/>
            <person name="Suzuki M."/>
            <person name="Aoki J."/>
            <person name="Arakawa T."/>
            <person name="Iida J."/>
            <person name="Imamura K."/>
            <person name="Itoh M."/>
            <person name="Kato T."/>
            <person name="Kawaji H."/>
            <person name="Kawagashira N."/>
            <person name="Kawashima T."/>
            <person name="Kojima M."/>
            <person name="Kondo S."/>
            <person name="Konno H."/>
            <person name="Nakano K."/>
            <person name="Ninomiya N."/>
            <person name="Nishio T."/>
            <person name="Okada M."/>
            <person name="Plessy C."/>
            <person name="Shibata K."/>
            <person name="Shiraki T."/>
            <person name="Suzuki S."/>
            <person name="Tagami M."/>
            <person name="Waki K."/>
            <person name="Watahiki A."/>
            <person name="Okamura-Oho Y."/>
            <person name="Suzuki H."/>
            <person name="Kawai J."/>
            <person name="Hayashizaki Y."/>
        </authorList>
    </citation>
    <scope>NUCLEOTIDE SEQUENCE [LARGE SCALE MRNA]</scope>
    <source>
        <strain evidence="34">C57BL/6J</strain>
        <strain evidence="37">NOD</strain>
        <tissue evidence="35">Bone marrow macrophage</tissue>
        <tissue evidence="34">Embryonic stomach</tissue>
        <tissue evidence="36">Skin</tissue>
        <tissue evidence="37">Spleen</tissue>
    </source>
</reference>
<reference key="3">
    <citation type="journal article" date="2009" name="PLoS Biol.">
        <title>Lineage-specific biology revealed by a finished genome assembly of the mouse.</title>
        <authorList>
            <person name="Church D.M."/>
            <person name="Goodstadt L."/>
            <person name="Hillier L.W."/>
            <person name="Zody M.C."/>
            <person name="Goldstein S."/>
            <person name="She X."/>
            <person name="Bult C.J."/>
            <person name="Agarwala R."/>
            <person name="Cherry J.L."/>
            <person name="DiCuccio M."/>
            <person name="Hlavina W."/>
            <person name="Kapustin Y."/>
            <person name="Meric P."/>
            <person name="Maglott D."/>
            <person name="Birtle Z."/>
            <person name="Marques A.C."/>
            <person name="Graves T."/>
            <person name="Zhou S."/>
            <person name="Teague B."/>
            <person name="Potamousis K."/>
            <person name="Churas C."/>
            <person name="Place M."/>
            <person name="Herschleb J."/>
            <person name="Runnheim R."/>
            <person name="Forrest D."/>
            <person name="Amos-Landgraf J."/>
            <person name="Schwartz D.C."/>
            <person name="Cheng Z."/>
            <person name="Lindblad-Toh K."/>
            <person name="Eichler E.E."/>
            <person name="Ponting C.P."/>
        </authorList>
    </citation>
    <scope>NUCLEOTIDE SEQUENCE [LARGE SCALE GENOMIC DNA]</scope>
    <source>
        <strain>C57BL/6J</strain>
    </source>
</reference>
<reference evidence="32" key="4">
    <citation type="journal article" date="2004" name="Genome Res.">
        <title>The status, quality, and expansion of the NIH full-length cDNA project: the Mammalian Gene Collection (MGC).</title>
        <authorList>
            <consortium name="The MGC Project Team"/>
        </authorList>
    </citation>
    <scope>NUCLEOTIDE SEQUENCE [LARGE SCALE MRNA]</scope>
    <source>
        <strain evidence="32">Czech II</strain>
        <strain evidence="31">FVB/N</strain>
        <tissue evidence="32">Lung</tissue>
        <tissue evidence="31">Mammary gland</tissue>
    </source>
</reference>
<reference key="5">
    <citation type="journal article" date="2008" name="J. Biol. Chem.">
        <title>A novel CCCH-zinc finger protein family regulates proinflammatory activation of macrophages.</title>
        <authorList>
            <person name="Liang J."/>
            <person name="Wang J."/>
            <person name="Azfer A."/>
            <person name="Song W."/>
            <person name="Tromp G."/>
            <person name="Kolattukudy P.E."/>
            <person name="Fu M."/>
        </authorList>
    </citation>
    <scope>FUNCTION IN INFLAMMATION</scope>
    <scope>TISSUE SPECIFICITY</scope>
    <scope>INDUCTION</scope>
</reference>
<reference key="6">
    <citation type="journal article" date="2008" name="PLoS ONE">
        <title>Genome-wide survey and expression profiling of CCCH-zinc finger family reveals a functional module in macrophage activation.</title>
        <authorList>
            <person name="Liang J."/>
            <person name="Song W."/>
            <person name="Tromp G."/>
            <person name="Kolattukudy P.E."/>
            <person name="Fu M."/>
        </authorList>
    </citation>
    <scope>TISSUE SPECIFICITY</scope>
    <scope>INDUCTION</scope>
</reference>
<reference key="7">
    <citation type="journal article" date="2009" name="J. Biol. Chem.">
        <title>MCP-1 (monocyte chemotactic protein-1)-induced protein, a recently identified zinc finger protein, induces adipogenesis in 3T3-L1 pre-adipocytes without peroxisome proliferator-activated receptor gamma.</title>
        <authorList>
            <person name="Younce C.W."/>
            <person name="Azfer A."/>
            <person name="Kolattukudy P.E."/>
        </authorList>
    </citation>
    <scope>FUNCTION AS A TRANSCRIPTION FACTOR IN ADIPOGENESIS</scope>
    <scope>INDUCTION</scope>
</reference>
<reference key="8">
    <citation type="journal article" date="2009" name="Nature">
        <title>Zc3h12a is an RNase essential for controlling immune responses by regulating mRNA decay.</title>
        <authorList>
            <person name="Matsushita K."/>
            <person name="Takeuchi O."/>
            <person name="Standley D.M."/>
            <person name="Kumagai Y."/>
            <person name="Kawagoe T."/>
            <person name="Miyake T."/>
            <person name="Satoh T."/>
            <person name="Kato H."/>
            <person name="Tsujimura T."/>
            <person name="Nakamura H."/>
            <person name="Akira S."/>
        </authorList>
    </citation>
    <scope>FUNCTION AS AN ENDORIBONUCLEASE</scope>
    <scope>CATALYTIC ACTIVITY</scope>
    <scope>COFACTOR</scope>
    <scope>RNA-BINDING</scope>
    <scope>SUBCELLULAR LOCATION</scope>
    <scope>MUTAGENESIS OF ASP-141 AND CYS-306</scope>
    <scope>INDUCTION</scope>
    <scope>DISRUPTION PHENOTYPE</scope>
</reference>
<reference key="9">
    <citation type="journal article" date="2010" name="J. Exp. Med.">
        <title>MCP-induced protein 1 deubiquitinates TRAF proteins and negatively regulates JNK and NF-kappaB signaling.</title>
        <authorList>
            <person name="Liang J."/>
            <person name="Saad Y."/>
            <person name="Lei T."/>
            <person name="Wang J."/>
            <person name="Qi D."/>
            <person name="Yang Q."/>
            <person name="Kolattukudy P.E."/>
            <person name="Fu M."/>
        </authorList>
    </citation>
    <scope>FUNCTION IN INFLAMMATION</scope>
    <scope>CATALYTIC ACTIVITY</scope>
    <scope>INTERACTION WITH UBIQUITIN</scope>
    <scope>DOMAIN</scope>
    <scope>DISRUPTION PHENOTYPE</scope>
    <scope>MUTAGENESIS OF ASP-141; CYS-157; ASP-278; ASP-279 AND CYS-306</scope>
</reference>
<reference key="10">
    <citation type="journal article" date="2011" name="J. Biol. Chem.">
        <title>Monocyte chemotactic protein-induced protein 1 (MCPIP1) suppresses stress granule formation and determines apoptosis under stress.</title>
        <authorList>
            <person name="Qi D."/>
            <person name="Huang S."/>
            <person name="Miao R."/>
            <person name="She Z.G."/>
            <person name="Quinn T."/>
            <person name="Chang Y."/>
            <person name="Liu J."/>
            <person name="Fan D."/>
            <person name="Chen Y.E."/>
            <person name="Fu M."/>
        </authorList>
    </citation>
    <scope>FUNCTION IN STRESS GRANULE FORMATION</scope>
    <scope>SUBCELLULAR LOCATION</scope>
    <scope>DISRUPTION PHENOTYPE</scope>
    <scope>MUTAGENESIS OF ASP-141; CYS-157; ASP-225 AND ASP-226</scope>
</reference>
<reference key="11">
    <citation type="journal article" date="2011" name="J. Mol. Cell. Cardiol.">
        <title>MCP-1-induced protein attenuates endotoxin-induced myocardial dysfunction by suppressing cardiac NF-kappaB activation via inhibition of IkappaB kinase activation.</title>
        <authorList>
            <person name="Niu J."/>
            <person name="Wang K."/>
            <person name="Graham S."/>
            <person name="Azfer A."/>
            <person name="Kolattukudy P.E."/>
        </authorList>
    </citation>
    <scope>FUNCTION IN INFLAMMATION</scope>
    <scope>TISSUE SPECIFICITY</scope>
    <scope>INDUCTION</scope>
</reference>
<reference key="12">
    <citation type="journal article" date="2011" name="Nat. Immunol.">
        <title>The IkappaB kinase complex regulates the stability of cytokine-encoding mRNA induced by TLR-IL-1R by controlling degradation of regnase-1.</title>
        <authorList>
            <person name="Iwasaki H."/>
            <person name="Takeuchi O."/>
            <person name="Teraguchi S."/>
            <person name="Matsushita K."/>
            <person name="Uehata T."/>
            <person name="Kuniyoshi K."/>
            <person name="Satoh T."/>
            <person name="Saitoh T."/>
            <person name="Matsushita M."/>
            <person name="Standley D.M."/>
            <person name="Akira S."/>
        </authorList>
    </citation>
    <scope>FUNCTION AS AN ENDORIBONUCLEASE</scope>
    <scope>INTERACTION WITH BTRC; IKBKB AND IRAK1</scope>
    <scope>PHOSPHORYLATION AT SER-435 AND SER-439</scope>
    <scope>TISSUE SPECIFICITY</scope>
    <scope>MUTAGENESIS OF SER-435 AND SER-439</scope>
</reference>
<reference key="13">
    <citation type="journal article" date="2012" name="Cell. Physiol. Biochem.">
        <title>MCP-1 induced protein promotes adipogenesis via oxidative stress, endoplasmic reticulum stress and autophagy.</title>
        <authorList>
            <person name="Younce C."/>
            <person name="Kolattukudy P."/>
        </authorList>
    </citation>
    <scope>FUNCTION IN ADIPOGENESIS</scope>
</reference>
<reference key="14">
    <citation type="journal article" date="2012" name="PLoS ONE">
        <title>MCPIP1 down-regulates IL-2 expression through an ARE-independent pathway.</title>
        <authorList>
            <person name="Li M."/>
            <person name="Cao W."/>
            <person name="Liu H."/>
            <person name="Zhang W."/>
            <person name="Liu X."/>
            <person name="Cai Z."/>
            <person name="Guo J."/>
            <person name="Wang X."/>
            <person name="Hui Z."/>
            <person name="Zhang H."/>
            <person name="Wang J."/>
            <person name="Wang L."/>
        </authorList>
    </citation>
    <scope>FUNCTION AS AN ENDORIBONUCLEASE</scope>
    <scope>INDUCTION</scope>
</reference>
<reference key="15">
    <citation type="journal article" date="2013" name="Cell">
        <title>Malt1-induced cleavage of regnase-1 in CD4(+) helper T cells regulates immune activation.</title>
        <authorList>
            <person name="Uehata T."/>
            <person name="Iwasaki H."/>
            <person name="Vandenbon A."/>
            <person name="Matsushita K."/>
            <person name="Hernandez-Cuellar E."/>
            <person name="Kuniyoshi K."/>
            <person name="Satoh T."/>
            <person name="Mino T."/>
            <person name="Suzuki Y."/>
            <person name="Standley D.M."/>
            <person name="Tsujimura T."/>
            <person name="Rakugi H."/>
            <person name="Isaka Y."/>
            <person name="Takeuchi O."/>
            <person name="Akira S."/>
        </authorList>
    </citation>
    <scope>FUNCTION IN T-CELL ACTIVATION</scope>
    <scope>PROTEOLYTIC CLEAVAGE</scope>
    <scope>DISRUPTION PHENOTYPE</scope>
    <scope>CONDITIONAL KNOCKOUT</scope>
    <scope>MUTAGENESIS OF ARG-111; ARG-130; ARG-136; ASP-141; ARG-158 AND ARG-214</scope>
</reference>
<reference key="16">
    <citation type="journal article" date="2014" name="Nat. Immunol.">
        <title>Cleavage of roquin and regnase-1 by the paracaspase MALT1 releases their cooperatively repressed targets to promote T(H)17 differentiation.</title>
        <authorList>
            <person name="Jeltsch K.M."/>
            <person name="Hu D."/>
            <person name="Brenner S."/>
            <person name="Zoeller J."/>
            <person name="Heinz G.A."/>
            <person name="Nagel D."/>
            <person name="Vogel K.U."/>
            <person name="Rehage N."/>
            <person name="Warth S.C."/>
            <person name="Edelmann S.L."/>
            <person name="Gloury R."/>
            <person name="Martin N."/>
            <person name="Lohs C."/>
            <person name="Lech M."/>
            <person name="Stehklein J.E."/>
            <person name="Geerlof A."/>
            <person name="Kremmer E."/>
            <person name="Weber A."/>
            <person name="Anders H.J."/>
            <person name="Schmitz I."/>
            <person name="Schmidt-Supprian M."/>
            <person name="Fu M."/>
            <person name="Holtmann H."/>
            <person name="Krappmann D."/>
            <person name="Ruland J."/>
            <person name="Kallies A."/>
            <person name="Heikenwalder M."/>
            <person name="Heissmeyer V."/>
        </authorList>
    </citation>
    <scope>PROTEOLYTIC CLEAVAGE</scope>
    <scope>MUTAGENESIS OF ASP-141; CYS-157 AND 225-ASP-ASP-226</scope>
    <scope>FUNCTION</scope>
</reference>
<reference key="17">
    <citation type="journal article" date="2015" name="Cell">
        <title>Regnase-1 and Roquin regulate a common element in inflammatory mRNAs by spatiotemporally distinct mechanisms.</title>
        <authorList>
            <person name="Mino T."/>
            <person name="Murakawa Y."/>
            <person name="Fukao A."/>
            <person name="Vandenbon A."/>
            <person name="Wessels H.H."/>
            <person name="Ori D."/>
            <person name="Uehata T."/>
            <person name="Tartey S."/>
            <person name="Akira S."/>
            <person name="Suzuki Y."/>
            <person name="Vinuesa C.G."/>
            <person name="Ohler U."/>
            <person name="Standley D.M."/>
            <person name="Landthaler M."/>
            <person name="Fujiwara T."/>
            <person name="Takeuchi O."/>
        </authorList>
    </citation>
    <scope>FUNCTION AS AN ENDORIBONUCLEASE IN INFLAMMATION</scope>
    <scope>INTERACTION WITH UPF1</scope>
    <scope>ASSOCIATION WITH RIBOSOMES</scope>
    <scope>SUBCELLULAR LOCATION</scope>
    <scope>DISRUPTION PHENOTYPE</scope>
    <scope>CONDITIONAL KNOCKOUT</scope>
    <scope>MUTAGENESIS OF ASP-141</scope>
</reference>
<reference key="18">
    <citation type="journal article" date="2015" name="Immunity">
        <title>MCPIP1 endoribonuclease activity negatively regulates interleukin-17-mediated signaling and inflammation.</title>
        <authorList>
            <person name="Garg A.V."/>
            <person name="Amatya N."/>
            <person name="Chen K."/>
            <person name="Cruz J.A."/>
            <person name="Grover P."/>
            <person name="Whibley N."/>
            <person name="Conti H.R."/>
            <person name="Hernandez Mir G."/>
            <person name="Sirakova T."/>
            <person name="Childs E.C."/>
            <person name="Smithgall T.E."/>
            <person name="Biswas P.S."/>
            <person name="Kolls J.K."/>
            <person name="McGeachy M.J."/>
            <person name="Kolattukudy P.E."/>
            <person name="Gaffen S.L."/>
        </authorList>
    </citation>
    <scope>DISRUPTION PHENOTYPE</scope>
    <scope>INDUCTION</scope>
</reference>
<reference key="19">
    <citation type="journal article" date="2015" name="J. Biol. Chem.">
        <title>Monocyte chemotactic protein-induced protein 1 and 4 form a complex but act independently in regulation of interleukin-6 mRNA degradation.</title>
        <authorList>
            <person name="Huang S."/>
            <person name="Liu S."/>
            <person name="Fu J.J."/>
            <person name="Tony Wang T."/>
            <person name="Yao X."/>
            <person name="Kumar A."/>
            <person name="Liu G."/>
            <person name="Fu M."/>
        </authorList>
    </citation>
    <scope>FUNCTION AS AN ENDORIBONUCLEASE</scope>
</reference>
<reference key="20">
    <citation type="journal article" date="2015" name="J. Immunol.">
        <title>Transcription factors STAT6 and KLF4 implement macrophage polarization via the dual catalytic powers of MCPIP.</title>
        <authorList>
            <person name="Kapoor N."/>
            <person name="Niu J."/>
            <person name="Saad Y."/>
            <person name="Kumar S."/>
            <person name="Sirakova T."/>
            <person name="Becerra E."/>
            <person name="Li X."/>
            <person name="Kolattukudy P.E."/>
        </authorList>
    </citation>
    <scope>FUNCTION AS A ENDORIBONUCLEASE IN MACROPHAGE POLARIZATION</scope>
    <scope>DISRUPTION PHENOTYPE</scope>
    <scope>CONDITIONAL KNOCKOUT</scope>
    <scope>INDUCTION</scope>
    <scope>DOMAIN</scope>
    <scope>MUTAGENESIS OF ASP-141</scope>
</reference>
<reference key="21">
    <citation type="journal article" date="2018" name="Eur. J. Immunol.">
        <title>Arid5a stabilizes OX40 mRNA in murine CD4+ T cells by recognizing a stem-loop structure in its 3'UTR.</title>
        <authorList>
            <person name="Hanieh H."/>
            <person name="Masuda K."/>
            <person name="Metwally H."/>
            <person name="Chalise J.P."/>
            <person name="Mohamed M."/>
            <person name="Nyati K.K."/>
            <person name="Standley D.M."/>
            <person name="Li S."/>
            <person name="Higa M."/>
            <person name="Zaman M.M."/>
            <person name="Kishimoto T."/>
        </authorList>
    </citation>
    <scope>FUNCTION</scope>
    <scope>TISSUE SPECIFICITY</scope>
</reference>
<reference evidence="29" key="22">
    <citation type="journal article" date="2022" name="Nucleic Acids Res.">
        <title>The silencing of ets-4 mRNA relies on the functional cooperation between REGE-1/Regnase-1 and RLE-1/Roquin-1.</title>
        <authorList>
            <person name="Sobanska D."/>
            <person name="Komur A.A."/>
            <person name="Chabowska-Kita A."/>
            <person name="Gumna J."/>
            <person name="Kumari P."/>
            <person name="Pachulska-Wieczorek K."/>
            <person name="Ciosk R."/>
        </authorList>
    </citation>
    <scope>FUNCTION</scope>
</reference>
<evidence type="ECO:0000250" key="1">
    <source>
        <dbReference type="UniProtKB" id="Q5D1E8"/>
    </source>
</evidence>
<evidence type="ECO:0000255" key="2"/>
<evidence type="ECO:0000256" key="3">
    <source>
        <dbReference type="SAM" id="MobiDB-lite"/>
    </source>
</evidence>
<evidence type="ECO:0000269" key="4">
    <source>
    </source>
</evidence>
<evidence type="ECO:0000269" key="5">
    <source>
    </source>
</evidence>
<evidence type="ECO:0000269" key="6">
    <source>
    </source>
</evidence>
<evidence type="ECO:0000269" key="7">
    <source>
    </source>
</evidence>
<evidence type="ECO:0000269" key="8">
    <source>
    </source>
</evidence>
<evidence type="ECO:0000269" key="9">
    <source>
    </source>
</evidence>
<evidence type="ECO:0000269" key="10">
    <source>
    </source>
</evidence>
<evidence type="ECO:0000269" key="11">
    <source>
    </source>
</evidence>
<evidence type="ECO:0000269" key="12">
    <source>
    </source>
</evidence>
<evidence type="ECO:0000269" key="13">
    <source>
    </source>
</evidence>
<evidence type="ECO:0000269" key="14">
    <source>
    </source>
</evidence>
<evidence type="ECO:0000269" key="15">
    <source>
    </source>
</evidence>
<evidence type="ECO:0000269" key="16">
    <source>
    </source>
</evidence>
<evidence type="ECO:0000269" key="17">
    <source>
    </source>
</evidence>
<evidence type="ECO:0000269" key="18">
    <source>
    </source>
</evidence>
<evidence type="ECO:0000269" key="19">
    <source>
    </source>
</evidence>
<evidence type="ECO:0000269" key="20">
    <source>
    </source>
</evidence>
<evidence type="ECO:0000269" key="21">
    <source>
    </source>
</evidence>
<evidence type="ECO:0000269" key="22">
    <source>
    </source>
</evidence>
<evidence type="ECO:0000303" key="23">
    <source>
    </source>
</evidence>
<evidence type="ECO:0000303" key="24">
    <source>
    </source>
</evidence>
<evidence type="ECO:0000303" key="25">
    <source>
    </source>
</evidence>
<evidence type="ECO:0000303" key="26">
    <source>
    </source>
</evidence>
<evidence type="ECO:0000303" key="27">
    <source>
    </source>
</evidence>
<evidence type="ECO:0000303" key="28">
    <source>
    </source>
</evidence>
<evidence type="ECO:0000305" key="29"/>
<evidence type="ECO:0000305" key="30">
    <source>
    </source>
</evidence>
<evidence type="ECO:0000312" key="31">
    <source>
        <dbReference type="EMBL" id="AAH06817.1"/>
    </source>
</evidence>
<evidence type="ECO:0000312" key="32">
    <source>
        <dbReference type="EMBL" id="AAH36563.1"/>
    </source>
</evidence>
<evidence type="ECO:0000312" key="33">
    <source>
        <dbReference type="EMBL" id="AAX14018.1"/>
    </source>
</evidence>
<evidence type="ECO:0000312" key="34">
    <source>
        <dbReference type="EMBL" id="BAE25089.1"/>
    </source>
</evidence>
<evidence type="ECO:0000312" key="35">
    <source>
        <dbReference type="EMBL" id="BAE31025.1"/>
    </source>
</evidence>
<evidence type="ECO:0000312" key="36">
    <source>
        <dbReference type="EMBL" id="BAE36216.1"/>
    </source>
</evidence>
<evidence type="ECO:0000312" key="37">
    <source>
        <dbReference type="EMBL" id="BAE42965.1"/>
    </source>
</evidence>
<evidence type="ECO:0000312" key="38">
    <source>
        <dbReference type="MGI" id="MGI:2385891"/>
    </source>
</evidence>
<evidence type="ECO:0007829" key="39">
    <source>
        <dbReference type="PDB" id="2N5J"/>
    </source>
</evidence>
<evidence type="ECO:0007829" key="40">
    <source>
        <dbReference type="PDB" id="2N5K"/>
    </source>
</evidence>
<evidence type="ECO:0007829" key="41">
    <source>
        <dbReference type="PDB" id="2N5L"/>
    </source>
</evidence>
<evidence type="ECO:0007829" key="42">
    <source>
        <dbReference type="PDB" id="5H9W"/>
    </source>
</evidence>
<accession>Q5D1E7</accession>
<accession>Q3U8J3</accession>
<accession>Q3UE76</accession>
<accession>Q8JZW9</accession>
<accession>Q922T4</accession>
<name>ZC12A_MOUSE</name>
<keyword id="KW-0002">3D-structure</keyword>
<keyword id="KW-0037">Angiogenesis</keyword>
<keyword id="KW-0053">Apoptosis</keyword>
<keyword id="KW-0963">Cytoplasm</keyword>
<keyword id="KW-0217">Developmental protein</keyword>
<keyword id="KW-0221">Differentiation</keyword>
<keyword id="KW-0227">DNA damage</keyword>
<keyword id="KW-0238">DNA-binding</keyword>
<keyword id="KW-0255">Endonuclease</keyword>
<keyword id="KW-0256">Endoplasmic reticulum</keyword>
<keyword id="KW-0378">Hydrolase</keyword>
<keyword id="KW-0391">Immunity</keyword>
<keyword id="KW-0395">Inflammatory response</keyword>
<keyword id="KW-0460">Magnesium</keyword>
<keyword id="KW-0472">Membrane</keyword>
<keyword id="KW-0479">Metal-binding</keyword>
<keyword id="KW-0524">Neurogenesis</keyword>
<keyword id="KW-0540">Nuclease</keyword>
<keyword id="KW-0539">Nucleus</keyword>
<keyword id="KW-0597">Phosphoprotein</keyword>
<keyword id="KW-1185">Reference proteome</keyword>
<keyword id="KW-0694">RNA-binding</keyword>
<keyword id="KW-0346">Stress response</keyword>
<keyword id="KW-0832">Ubl conjugation</keyword>
<keyword id="KW-0833">Ubl conjugation pathway</keyword>
<keyword id="KW-0862">Zinc</keyword>
<keyword id="KW-0863">Zinc-finger</keyword>
<feature type="chain" id="PRO_0000341513" description="Endoribonuclease ZC3H12A">
    <location>
        <begin position="1"/>
        <end position="596"/>
    </location>
</feature>
<feature type="domain" description="RNase NYN" evidence="2">
    <location>
        <begin position="135"/>
        <end position="290"/>
    </location>
</feature>
<feature type="zinc finger region" description="C3H1-type">
    <location>
        <begin position="301"/>
        <end position="324"/>
    </location>
</feature>
<feature type="region of interest" description="Disordered" evidence="3">
    <location>
        <begin position="1"/>
        <end position="48"/>
    </location>
</feature>
<feature type="region of interest" description="Ubiquitin association domain" evidence="30">
    <location>
        <begin position="42"/>
        <end position="87"/>
    </location>
</feature>
<feature type="region of interest" description="Necessary for interaction with TANK" evidence="1">
    <location>
        <begin position="81"/>
        <end position="150"/>
    </location>
</feature>
<feature type="region of interest" description="Disordered" evidence="3">
    <location>
        <begin position="97"/>
        <end position="134"/>
    </location>
</feature>
<feature type="region of interest" description="RNase" evidence="1">
    <location>
        <begin position="112"/>
        <end position="281"/>
    </location>
</feature>
<feature type="region of interest" description="RNA binding" evidence="1">
    <location>
        <begin position="214"/>
        <end position="220"/>
    </location>
</feature>
<feature type="region of interest" description="Disordered" evidence="3">
    <location>
        <begin position="278"/>
        <end position="306"/>
    </location>
</feature>
<feature type="region of interest" description="Necessary for interaction with ZC3H12D" evidence="1">
    <location>
        <begin position="301"/>
        <end position="454"/>
    </location>
</feature>
<feature type="region of interest" description="Disordered" evidence="3">
    <location>
        <begin position="340"/>
        <end position="417"/>
    </location>
</feature>
<feature type="region of interest" description="Disordered" evidence="3">
    <location>
        <begin position="511"/>
        <end position="543"/>
    </location>
</feature>
<feature type="compositionally biased region" description="Polar residues" evidence="3">
    <location>
        <begin position="10"/>
        <end position="19"/>
    </location>
</feature>
<feature type="compositionally biased region" description="Low complexity" evidence="3">
    <location>
        <begin position="356"/>
        <end position="368"/>
    </location>
</feature>
<feature type="compositionally biased region" description="Low complexity" evidence="3">
    <location>
        <begin position="524"/>
        <end position="533"/>
    </location>
</feature>
<feature type="binding site" evidence="1">
    <location>
        <position position="226"/>
    </location>
    <ligand>
        <name>Mg(2+)</name>
        <dbReference type="ChEBI" id="CHEBI:18420"/>
    </ligand>
</feature>
<feature type="modified residue" description="Phosphoserine" evidence="1">
    <location>
        <position position="344"/>
    </location>
</feature>
<feature type="modified residue" description="Phosphoserine" evidence="12">
    <location>
        <position position="435"/>
    </location>
</feature>
<feature type="modified residue" description="Phosphoserine" evidence="12">
    <location>
        <position position="439"/>
    </location>
</feature>
<feature type="mutagenesis site" description="Loss of MALT1-dependent cleavage and degradation in T-cells." evidence="15">
    <original>R</original>
    <variation>A</variation>
    <location>
        <position position="111"/>
    </location>
</feature>
<feature type="mutagenesis site" description="Reduces MALT1-dependent cleavage and degradation in T-cells." evidence="15">
    <original>R</original>
    <variation>A</variation>
    <location>
        <position position="130"/>
    </location>
</feature>
<feature type="mutagenesis site" description="Reduces MALT1-dependent cleavage and degradation in T-cells." evidence="15">
    <original>R</original>
    <variation>A</variation>
    <location>
        <position position="136"/>
    </location>
</feature>
<feature type="mutagenesis site" description="Loss of RNase activity. Loss of mRNAs and miRNAs degradation. Loss of protein deubiquitination and suppression of inhibition on JNK and NF-kappa-B signaling pathway activation. Inhibits induction of angiogenesis and macrophage M2 polarization. Mislocalized in stress granule (SG). Loss of the ability to inhibit SG formation under stress. Does not inhibit binding to IL6 mRNA. Increases ICOS surface expression." evidence="7 9 11 15 16 17 18">
    <original>D</original>
    <variation>N</variation>
    <location>
        <position position="141"/>
    </location>
</feature>
<feature type="mutagenesis site" description="Loss of protein deubiquitination and suppression of inhibition on JNK and NF-kappa-B signaling pathway activation. Loss of the ability to inhibit stress granule (SG) formation. No loss of RNase activity. No effect on ICOS surface expression." evidence="9 11 16">
    <original>C</original>
    <variation>A</variation>
    <location>
        <position position="157"/>
    </location>
</feature>
<feature type="mutagenesis site" description="Reduces MALT1-dependent cleavage and degradation in T-cells." evidence="15">
    <original>R</original>
    <variation>A</variation>
    <location>
        <position position="158"/>
    </location>
</feature>
<feature type="mutagenesis site" description="Reduces MALT1-dependent cleavage and degradation in T-cells." evidence="15">
    <original>R</original>
    <variation>A</variation>
    <location>
        <position position="214"/>
    </location>
</feature>
<feature type="mutagenesis site" description="Increases ICOS surface expression." evidence="16">
    <original>DD</original>
    <variation>AA</variation>
    <location>
        <begin position="225"/>
        <end position="226"/>
    </location>
</feature>
<feature type="mutagenesis site" description="Loss of RNase activity, no loss of protein deubiquitination and ability to inhibit stress granule (SG) formation under stress; when associated with A-226." evidence="11">
    <original>D</original>
    <variation>A</variation>
    <location>
        <position position="225"/>
    </location>
</feature>
<feature type="mutagenesis site" description="Loss of RNase activity and no loss of protein deubiquitination; when associated with A-226." evidence="11">
    <original>D</original>
    <variation>A</variation>
    <location>
        <position position="226"/>
    </location>
</feature>
<feature type="mutagenesis site" description="Loss of inhibition on JNK and NF-kappa-B signaling pathway activation; when associated with A-279." evidence="9">
    <original>D</original>
    <variation>A</variation>
    <location>
        <position position="278"/>
    </location>
</feature>
<feature type="mutagenesis site" description="Loss of inhibition on JNK and NF-kappa-B signaling pathway activation; when associated with A-278." evidence="9">
    <original>D</original>
    <variation>A</variation>
    <location>
        <position position="279"/>
    </location>
</feature>
<feature type="mutagenesis site" description="Loss of protein deubiquitination and suppression of inhibition on JNK and NF-kappa-B signaling pathway activations. No loss of RNase activity." evidence="7 9">
    <original>C</original>
    <variation>R</variation>
    <location>
        <position position="306"/>
    </location>
</feature>
<feature type="mutagenesis site" description="Reduces its phosphorylation status, does not interact with IKBKB/IKKB and BTRC, inhibits IL6 mRNA instability and IKK-mediated degradation of ZC3H12A; when associated with A-439." evidence="12">
    <original>S</original>
    <variation>A</variation>
    <location>
        <position position="435"/>
    </location>
</feature>
<feature type="mutagenesis site" description="Reduces its phosphorylation status, does not interact with IKBKB/IKKB and BTRC, inhibits IL6 mRNA instability and IKK-mediated degradation of ZC3H12A; when associated with A-435.">
    <original>S</original>
    <variation>A</variation>
    <location>
        <position position="439"/>
    </location>
</feature>
<feature type="sequence conflict" description="In Ref. 2; BAE29035." evidence="29" ref="2">
    <original>P</original>
    <variation>H</variation>
    <location>
        <position position="280"/>
    </location>
</feature>
<feature type="sequence conflict" description="In Ref. 1; AAX14018." evidence="29" ref="1">
    <original>G</original>
    <variation>E</variation>
    <location>
        <position position="315"/>
    </location>
</feature>
<feature type="helix" evidence="39">
    <location>
        <begin position="47"/>
        <end position="58"/>
    </location>
</feature>
<feature type="helix" evidence="39">
    <location>
        <begin position="62"/>
        <end position="72"/>
    </location>
</feature>
<feature type="helix" evidence="39">
    <location>
        <begin position="78"/>
        <end position="88"/>
    </location>
</feature>
<feature type="strand" evidence="42">
    <location>
        <begin position="138"/>
        <end position="141"/>
    </location>
</feature>
<feature type="helix" evidence="42">
    <location>
        <begin position="142"/>
        <end position="148"/>
    </location>
</feature>
<feature type="strand" evidence="42">
    <location>
        <begin position="149"/>
        <end position="151"/>
    </location>
</feature>
<feature type="strand" evidence="42">
    <location>
        <begin position="154"/>
        <end position="156"/>
    </location>
</feature>
<feature type="helix" evidence="42">
    <location>
        <begin position="157"/>
        <end position="169"/>
    </location>
</feature>
<feature type="strand" evidence="42">
    <location>
        <begin position="175"/>
        <end position="180"/>
    </location>
</feature>
<feature type="helix" evidence="42">
    <location>
        <begin position="181"/>
        <end position="184"/>
    </location>
</feature>
<feature type="strand" evidence="42">
    <location>
        <begin position="193"/>
        <end position="195"/>
    </location>
</feature>
<feature type="helix" evidence="42">
    <location>
        <begin position="198"/>
        <end position="204"/>
    </location>
</feature>
<feature type="strand" evidence="42">
    <location>
        <begin position="208"/>
        <end position="211"/>
    </location>
</feature>
<feature type="strand" evidence="42">
    <location>
        <begin position="213"/>
        <end position="216"/>
    </location>
</feature>
<feature type="strand" evidence="42">
    <location>
        <begin position="219"/>
        <end position="222"/>
    </location>
</feature>
<feature type="helix" evidence="42">
    <location>
        <begin position="225"/>
        <end position="236"/>
    </location>
</feature>
<feature type="strand" evidence="42">
    <location>
        <begin position="239"/>
        <end position="241"/>
    </location>
</feature>
<feature type="helix" evidence="42">
    <location>
        <begin position="247"/>
        <end position="252"/>
    </location>
</feature>
<feature type="helix" evidence="42">
    <location>
        <begin position="254"/>
        <end position="263"/>
    </location>
</feature>
<feature type="strand" evidence="42">
    <location>
        <begin position="268"/>
        <end position="270"/>
    </location>
</feature>
<feature type="strand" evidence="42">
    <location>
        <begin position="273"/>
        <end position="275"/>
    </location>
</feature>
<feature type="strand" evidence="42">
    <location>
        <begin position="283"/>
        <end position="285"/>
    </location>
</feature>
<feature type="helix" evidence="42">
    <location>
        <begin position="288"/>
        <end position="291"/>
    </location>
</feature>
<feature type="strand" evidence="40">
    <location>
        <begin position="301"/>
        <end position="304"/>
    </location>
</feature>
<feature type="strand" evidence="40">
    <location>
        <begin position="323"/>
        <end position="325"/>
    </location>
</feature>
<feature type="helix" evidence="41">
    <location>
        <begin position="546"/>
        <end position="557"/>
    </location>
</feature>
<feature type="turn" evidence="41">
    <location>
        <begin position="558"/>
        <end position="560"/>
    </location>
</feature>
<feature type="helix" evidence="41">
    <location>
        <begin position="563"/>
        <end position="572"/>
    </location>
</feature>
<feature type="helix" evidence="41">
    <location>
        <begin position="581"/>
        <end position="592"/>
    </location>
</feature>